<gene>
    <name evidence="1" type="primary">leuS</name>
    <name type="ordered locus">Francci3_3901</name>
</gene>
<accession>Q2J641</accession>
<comment type="catalytic activity">
    <reaction evidence="1">
        <text>tRNA(Leu) + L-leucine + ATP = L-leucyl-tRNA(Leu) + AMP + diphosphate</text>
        <dbReference type="Rhea" id="RHEA:11688"/>
        <dbReference type="Rhea" id="RHEA-COMP:9613"/>
        <dbReference type="Rhea" id="RHEA-COMP:9622"/>
        <dbReference type="ChEBI" id="CHEBI:30616"/>
        <dbReference type="ChEBI" id="CHEBI:33019"/>
        <dbReference type="ChEBI" id="CHEBI:57427"/>
        <dbReference type="ChEBI" id="CHEBI:78442"/>
        <dbReference type="ChEBI" id="CHEBI:78494"/>
        <dbReference type="ChEBI" id="CHEBI:456215"/>
        <dbReference type="EC" id="6.1.1.4"/>
    </reaction>
</comment>
<comment type="subcellular location">
    <subcellularLocation>
        <location evidence="1">Cytoplasm</location>
    </subcellularLocation>
</comment>
<comment type="similarity">
    <text evidence="1">Belongs to the class-I aminoacyl-tRNA synthetase family.</text>
</comment>
<proteinExistence type="inferred from homology"/>
<protein>
    <recommendedName>
        <fullName evidence="1">Leucine--tRNA ligase</fullName>
        <ecNumber evidence="1">6.1.1.4</ecNumber>
    </recommendedName>
    <alternativeName>
        <fullName evidence="1">Leucyl-tRNA synthetase</fullName>
        <shortName evidence="1">LeuRS</shortName>
    </alternativeName>
</protein>
<reference key="1">
    <citation type="journal article" date="2007" name="Genome Res.">
        <title>Genome characteristics of facultatively symbiotic Frankia sp. strains reflect host range and host plant biogeography.</title>
        <authorList>
            <person name="Normand P."/>
            <person name="Lapierre P."/>
            <person name="Tisa L.S."/>
            <person name="Gogarten J.P."/>
            <person name="Alloisio N."/>
            <person name="Bagnarol E."/>
            <person name="Bassi C.A."/>
            <person name="Berry A.M."/>
            <person name="Bickhart D.M."/>
            <person name="Choisne N."/>
            <person name="Couloux A."/>
            <person name="Cournoyer B."/>
            <person name="Cruveiller S."/>
            <person name="Daubin V."/>
            <person name="Demange N."/>
            <person name="Francino M.P."/>
            <person name="Goltsman E."/>
            <person name="Huang Y."/>
            <person name="Kopp O.R."/>
            <person name="Labarre L."/>
            <person name="Lapidus A."/>
            <person name="Lavire C."/>
            <person name="Marechal J."/>
            <person name="Martinez M."/>
            <person name="Mastronunzio J.E."/>
            <person name="Mullin B.C."/>
            <person name="Niemann J."/>
            <person name="Pujic P."/>
            <person name="Rawnsley T."/>
            <person name="Rouy Z."/>
            <person name="Schenowitz C."/>
            <person name="Sellstedt A."/>
            <person name="Tavares F."/>
            <person name="Tomkins J.P."/>
            <person name="Vallenet D."/>
            <person name="Valverde C."/>
            <person name="Wall L.G."/>
            <person name="Wang Y."/>
            <person name="Medigue C."/>
            <person name="Benson D.R."/>
        </authorList>
    </citation>
    <scope>NUCLEOTIDE SEQUENCE [LARGE SCALE GENOMIC DNA]</scope>
    <source>
        <strain>DSM 45818 / CECT 9043 / HFP020203 / CcI3</strain>
    </source>
</reference>
<dbReference type="EC" id="6.1.1.4" evidence="1"/>
<dbReference type="EMBL" id="CP000249">
    <property type="protein sequence ID" value="ABD13251.1"/>
    <property type="molecule type" value="Genomic_DNA"/>
</dbReference>
<dbReference type="RefSeq" id="WP_011438275.1">
    <property type="nucleotide sequence ID" value="NC_007777.1"/>
</dbReference>
<dbReference type="SMR" id="Q2J641"/>
<dbReference type="STRING" id="106370.Francci3_3901"/>
<dbReference type="KEGG" id="fra:Francci3_3901"/>
<dbReference type="eggNOG" id="COG0495">
    <property type="taxonomic scope" value="Bacteria"/>
</dbReference>
<dbReference type="HOGENOM" id="CLU_004427_0_0_11"/>
<dbReference type="OrthoDB" id="9810365at2"/>
<dbReference type="PhylomeDB" id="Q2J641"/>
<dbReference type="Proteomes" id="UP000001937">
    <property type="component" value="Chromosome"/>
</dbReference>
<dbReference type="GO" id="GO:0005829">
    <property type="term" value="C:cytosol"/>
    <property type="evidence" value="ECO:0007669"/>
    <property type="project" value="TreeGrafter"/>
</dbReference>
<dbReference type="GO" id="GO:0002161">
    <property type="term" value="F:aminoacyl-tRNA deacylase activity"/>
    <property type="evidence" value="ECO:0007669"/>
    <property type="project" value="InterPro"/>
</dbReference>
<dbReference type="GO" id="GO:0005524">
    <property type="term" value="F:ATP binding"/>
    <property type="evidence" value="ECO:0007669"/>
    <property type="project" value="UniProtKB-UniRule"/>
</dbReference>
<dbReference type="GO" id="GO:0004823">
    <property type="term" value="F:leucine-tRNA ligase activity"/>
    <property type="evidence" value="ECO:0007669"/>
    <property type="project" value="UniProtKB-UniRule"/>
</dbReference>
<dbReference type="GO" id="GO:0006429">
    <property type="term" value="P:leucyl-tRNA aminoacylation"/>
    <property type="evidence" value="ECO:0007669"/>
    <property type="project" value="UniProtKB-UniRule"/>
</dbReference>
<dbReference type="CDD" id="cd07958">
    <property type="entry name" value="Anticodon_Ia_Leu_BEm"/>
    <property type="match status" value="1"/>
</dbReference>
<dbReference type="FunFam" id="3.40.50.620:FF:000056">
    <property type="entry name" value="Leucine--tRNA ligase"/>
    <property type="match status" value="1"/>
</dbReference>
<dbReference type="FunFam" id="3.40.50.620:FF:000060">
    <property type="entry name" value="Leucine--tRNA ligase"/>
    <property type="match status" value="1"/>
</dbReference>
<dbReference type="FunFam" id="3.40.50.620:FF:000087">
    <property type="entry name" value="Leucine--tRNA ligase"/>
    <property type="match status" value="1"/>
</dbReference>
<dbReference type="FunFam" id="1.10.730.10:FF:000011">
    <property type="entry name" value="Leucine--tRNA ligase chloroplastic/mitochondrial"/>
    <property type="match status" value="1"/>
</dbReference>
<dbReference type="Gene3D" id="3.40.50.620">
    <property type="entry name" value="HUPs"/>
    <property type="match status" value="3"/>
</dbReference>
<dbReference type="Gene3D" id="1.10.730.10">
    <property type="entry name" value="Isoleucyl-tRNA Synthetase, Domain 1"/>
    <property type="match status" value="1"/>
</dbReference>
<dbReference type="Gene3D" id="3.90.740.10">
    <property type="entry name" value="Valyl/Leucyl/Isoleucyl-tRNA synthetase, editing domain"/>
    <property type="match status" value="1"/>
</dbReference>
<dbReference type="HAMAP" id="MF_00049_B">
    <property type="entry name" value="Leu_tRNA_synth_B"/>
    <property type="match status" value="1"/>
</dbReference>
<dbReference type="InterPro" id="IPR002302">
    <property type="entry name" value="Leu-tRNA-ligase"/>
</dbReference>
<dbReference type="InterPro" id="IPR025709">
    <property type="entry name" value="Leu_tRNA-synth_edit"/>
</dbReference>
<dbReference type="InterPro" id="IPR013155">
    <property type="entry name" value="M/V/L/I-tRNA-synth_anticd-bd"/>
</dbReference>
<dbReference type="InterPro" id="IPR015413">
    <property type="entry name" value="Methionyl/Leucyl_tRNA_Synth"/>
</dbReference>
<dbReference type="InterPro" id="IPR014729">
    <property type="entry name" value="Rossmann-like_a/b/a_fold"/>
</dbReference>
<dbReference type="InterPro" id="IPR009080">
    <property type="entry name" value="tRNAsynth_Ia_anticodon-bd"/>
</dbReference>
<dbReference type="InterPro" id="IPR009008">
    <property type="entry name" value="Val/Leu/Ile-tRNA-synth_edit"/>
</dbReference>
<dbReference type="PANTHER" id="PTHR43740:SF2">
    <property type="entry name" value="LEUCINE--TRNA LIGASE, MITOCHONDRIAL"/>
    <property type="match status" value="1"/>
</dbReference>
<dbReference type="PANTHER" id="PTHR43740">
    <property type="entry name" value="LEUCYL-TRNA SYNTHETASE"/>
    <property type="match status" value="1"/>
</dbReference>
<dbReference type="Pfam" id="PF08264">
    <property type="entry name" value="Anticodon_1"/>
    <property type="match status" value="1"/>
</dbReference>
<dbReference type="Pfam" id="PF13603">
    <property type="entry name" value="tRNA-synt_1_2"/>
    <property type="match status" value="2"/>
</dbReference>
<dbReference type="Pfam" id="PF09334">
    <property type="entry name" value="tRNA-synt_1g"/>
    <property type="match status" value="1"/>
</dbReference>
<dbReference type="SUPFAM" id="SSF47323">
    <property type="entry name" value="Anticodon-binding domain of a subclass of class I aminoacyl-tRNA synthetases"/>
    <property type="match status" value="1"/>
</dbReference>
<dbReference type="SUPFAM" id="SSF52374">
    <property type="entry name" value="Nucleotidylyl transferase"/>
    <property type="match status" value="1"/>
</dbReference>
<dbReference type="SUPFAM" id="SSF50677">
    <property type="entry name" value="ValRS/IleRS/LeuRS editing domain"/>
    <property type="match status" value="1"/>
</dbReference>
<keyword id="KW-0030">Aminoacyl-tRNA synthetase</keyword>
<keyword id="KW-0067">ATP-binding</keyword>
<keyword id="KW-0963">Cytoplasm</keyword>
<keyword id="KW-0436">Ligase</keyword>
<keyword id="KW-0547">Nucleotide-binding</keyword>
<keyword id="KW-0648">Protein biosynthesis</keyword>
<keyword id="KW-1185">Reference proteome</keyword>
<name>SYL_FRACC</name>
<sequence>MARAMSETAEPGARTGAADTTVAPTGASGGIIPAAAGTAGGAPAGTGSVEPSFRYDARLAADIERRWQRRWADEGTFNSPNPVGPLSTGFEKVAGREPFYIMDMFPYPSGSGLHVGHPLGYIGTDVFARYLRMSGRHVLHPFGYDSFGLPAEQYAINTGQHPRDTTNANIANMRRQLSRLGLGHDTRREIATTDVGYYRWTQWIFQQIFNSWYDPQAGRARPIAELIEEFAAGTRAPVAGPAGGNTAVSVDAVRAANPAGLAWTELDEVSRRKVVNAHRLAYISEQLVNWCPGLGTVLANEEVTADGRSDIGNYPVFRRPLKQWILRITAYAERLISDLDLVDWPDSIKQMQRNWISPSEGASVEFTVVAPGEEAGASDPSGSSTARRIEVYTTRPDTLAGATFLVLAPEHPLADALIADTWPADTPVSWRFPAGRPGGGTEPADTAGPEAGADPAWTPRAAVDAYREFAAHRSDRQRGEEVIDRTGVFTGSYVRNPVGGGVIPVFLADYVLLGYGTGAIMAVPAHDSRDFSFARAFDLPIPAVLEPDADWYAAHGVVPATPSAQWPEAFSGAGEYRPGPASAPVLVGLSKSEAIKATVHWLEEIGAGRSARSYRLRDWLFSRQRYWGEPFPIVFDVDGLPHAVPDELLPIELPEMTDFRPTAMAEDDASDPVPPLARVADWVTVTLDLGDGPKQYRRETNTMPQWAGSCWYYLRYLDPTNTERFVDPTVERYWMARPGAVPGDGGVDLYVGGVEHAVLHLLYARFWHKVLYDLGHVSTKEPFKRLFNQGYIQADAFTDARGMYVPAAEVTATPDGRFLFQGAPVNRRSGKMGKSLKNSVSPDEMYDRFGADTLRVYEMAMGPLDADRPWHTDDIVGSHRFLQRLWRTVVDETTGAAAVVDEPLDDEALRVLHRTILTVTAEYAGLRFNTAVARLIELTNFVSKSYGKSPTPRALAEPLTLMAAPLAPHIAEELWSRLGHEESVSTVAFPIGDPALAAESVRTIPVQVNGKVRFTIEVPDGSAEQTVRDLLAAHPEFARQTDGRTIKKIIVVPGRIVNIAISPA</sequence>
<feature type="chain" id="PRO_0000334759" description="Leucine--tRNA ligase">
    <location>
        <begin position="1"/>
        <end position="1064"/>
    </location>
</feature>
<feature type="region of interest" description="Disordered" evidence="2">
    <location>
        <begin position="1"/>
        <end position="25"/>
    </location>
</feature>
<feature type="region of interest" description="Disordered" evidence="2">
    <location>
        <begin position="435"/>
        <end position="456"/>
    </location>
</feature>
<feature type="short sequence motif" description="'HIGH' region">
    <location>
        <begin position="106"/>
        <end position="117"/>
    </location>
</feature>
<feature type="short sequence motif" description="'KMSKS' region">
    <location>
        <begin position="831"/>
        <end position="835"/>
    </location>
</feature>
<feature type="binding site" evidence="1">
    <location>
        <position position="834"/>
    </location>
    <ligand>
        <name>ATP</name>
        <dbReference type="ChEBI" id="CHEBI:30616"/>
    </ligand>
</feature>
<organism>
    <name type="scientific">Frankia casuarinae (strain DSM 45818 / CECT 9043 / HFP020203 / CcI3)</name>
    <dbReference type="NCBI Taxonomy" id="106370"/>
    <lineage>
        <taxon>Bacteria</taxon>
        <taxon>Bacillati</taxon>
        <taxon>Actinomycetota</taxon>
        <taxon>Actinomycetes</taxon>
        <taxon>Frankiales</taxon>
        <taxon>Frankiaceae</taxon>
        <taxon>Frankia</taxon>
    </lineage>
</organism>
<evidence type="ECO:0000255" key="1">
    <source>
        <dbReference type="HAMAP-Rule" id="MF_00049"/>
    </source>
</evidence>
<evidence type="ECO:0000256" key="2">
    <source>
        <dbReference type="SAM" id="MobiDB-lite"/>
    </source>
</evidence>